<sequence length="319" mass="34812">MTEQGMHQELREGAGTAGDEGGLEAAAMDGGADNGIDVVLVTGLSGAGRGTAAKVLEDLGWYVADNLPPELIAQMVDLGLAAGSRITQLAVVMDVRSRGFTGDLDWVRTELATRNIVPRVLFLEASDDILVRRYEQNRRSHPLQGNQTLAEGIAAERTMLAPVRASADLVIDTSSLSVHALRDSIERAFAGETVAHTNVTVESFGYKYGLPMDADTVMDVRFLPNPHWVDRLRPNTGQHHEVRDYVLGQPGALEFLDSYHQLLDVVIDGYRREGKRYMTVAIGCTGGKHRSVAMAEALAERLQDSDLTVRVLHRDLGRE</sequence>
<gene>
    <name type="ordered locus">Mvan_2698</name>
</gene>
<name>Y2698_MYCVP</name>
<protein>
    <recommendedName>
        <fullName evidence="1">Nucleotide-binding protein Mvan_2698</fullName>
    </recommendedName>
</protein>
<feature type="chain" id="PRO_0000383271" description="Nucleotide-binding protein Mvan_2698">
    <location>
        <begin position="1"/>
        <end position="319"/>
    </location>
</feature>
<feature type="region of interest" description="Disordered" evidence="2">
    <location>
        <begin position="1"/>
        <end position="26"/>
    </location>
</feature>
<feature type="compositionally biased region" description="Basic and acidic residues" evidence="2">
    <location>
        <begin position="1"/>
        <end position="12"/>
    </location>
</feature>
<feature type="binding site" evidence="1">
    <location>
        <begin position="43"/>
        <end position="50"/>
    </location>
    <ligand>
        <name>ATP</name>
        <dbReference type="ChEBI" id="CHEBI:30616"/>
    </ligand>
</feature>
<feature type="binding site" evidence="1">
    <location>
        <begin position="94"/>
        <end position="97"/>
    </location>
    <ligand>
        <name>GTP</name>
        <dbReference type="ChEBI" id="CHEBI:37565"/>
    </ligand>
</feature>
<accession>A1T8K5</accession>
<keyword id="KW-0067">ATP-binding</keyword>
<keyword id="KW-0342">GTP-binding</keyword>
<keyword id="KW-0547">Nucleotide-binding</keyword>
<evidence type="ECO:0000255" key="1">
    <source>
        <dbReference type="HAMAP-Rule" id="MF_00636"/>
    </source>
</evidence>
<evidence type="ECO:0000256" key="2">
    <source>
        <dbReference type="SAM" id="MobiDB-lite"/>
    </source>
</evidence>
<comment type="function">
    <text evidence="1">Displays ATPase and GTPase activities.</text>
</comment>
<comment type="similarity">
    <text evidence="1">Belongs to the RapZ-like family.</text>
</comment>
<dbReference type="EMBL" id="CP000511">
    <property type="protein sequence ID" value="ABM13505.1"/>
    <property type="molecule type" value="Genomic_DNA"/>
</dbReference>
<dbReference type="SMR" id="A1T8K5"/>
<dbReference type="STRING" id="350058.Mvan_2698"/>
<dbReference type="KEGG" id="mva:Mvan_2698"/>
<dbReference type="eggNOG" id="COG1660">
    <property type="taxonomic scope" value="Bacteria"/>
</dbReference>
<dbReference type="HOGENOM" id="CLU_059558_0_0_11"/>
<dbReference type="Proteomes" id="UP000009159">
    <property type="component" value="Chromosome"/>
</dbReference>
<dbReference type="GO" id="GO:0005524">
    <property type="term" value="F:ATP binding"/>
    <property type="evidence" value="ECO:0007669"/>
    <property type="project" value="UniProtKB-UniRule"/>
</dbReference>
<dbReference type="GO" id="GO:0005525">
    <property type="term" value="F:GTP binding"/>
    <property type="evidence" value="ECO:0007669"/>
    <property type="project" value="UniProtKB-UniRule"/>
</dbReference>
<dbReference type="Gene3D" id="3.40.50.300">
    <property type="entry name" value="P-loop containing nucleotide triphosphate hydrolases"/>
    <property type="match status" value="1"/>
</dbReference>
<dbReference type="HAMAP" id="MF_00636">
    <property type="entry name" value="RapZ_like"/>
    <property type="match status" value="1"/>
</dbReference>
<dbReference type="InterPro" id="IPR027417">
    <property type="entry name" value="P-loop_NTPase"/>
</dbReference>
<dbReference type="InterPro" id="IPR005337">
    <property type="entry name" value="RapZ-like"/>
</dbReference>
<dbReference type="InterPro" id="IPR053930">
    <property type="entry name" value="RapZ-like_N"/>
</dbReference>
<dbReference type="InterPro" id="IPR053931">
    <property type="entry name" value="RapZ_C"/>
</dbReference>
<dbReference type="NCBIfam" id="NF003828">
    <property type="entry name" value="PRK05416.1"/>
    <property type="match status" value="1"/>
</dbReference>
<dbReference type="PANTHER" id="PTHR30448">
    <property type="entry name" value="RNASE ADAPTER PROTEIN RAPZ"/>
    <property type="match status" value="1"/>
</dbReference>
<dbReference type="PANTHER" id="PTHR30448:SF0">
    <property type="entry name" value="RNASE ADAPTER PROTEIN RAPZ"/>
    <property type="match status" value="1"/>
</dbReference>
<dbReference type="Pfam" id="PF22740">
    <property type="entry name" value="PapZ_C"/>
    <property type="match status" value="1"/>
</dbReference>
<dbReference type="Pfam" id="PF03668">
    <property type="entry name" value="RapZ-like_N"/>
    <property type="match status" value="1"/>
</dbReference>
<dbReference type="PIRSF" id="PIRSF005052">
    <property type="entry name" value="P-loopkin"/>
    <property type="match status" value="1"/>
</dbReference>
<dbReference type="SUPFAM" id="SSF52540">
    <property type="entry name" value="P-loop containing nucleoside triphosphate hydrolases"/>
    <property type="match status" value="1"/>
</dbReference>
<organism>
    <name type="scientific">Mycolicibacterium vanbaalenii (strain DSM 7251 / JCM 13017 / BCRC 16820 / KCTC 9966 / NRRL B-24157 / PYR-1)</name>
    <name type="common">Mycobacterium vanbaalenii</name>
    <dbReference type="NCBI Taxonomy" id="350058"/>
    <lineage>
        <taxon>Bacteria</taxon>
        <taxon>Bacillati</taxon>
        <taxon>Actinomycetota</taxon>
        <taxon>Actinomycetes</taxon>
        <taxon>Mycobacteriales</taxon>
        <taxon>Mycobacteriaceae</taxon>
        <taxon>Mycolicibacterium</taxon>
    </lineage>
</organism>
<reference key="1">
    <citation type="submission" date="2006-12" db="EMBL/GenBank/DDBJ databases">
        <title>Complete sequence of Mycobacterium vanbaalenii PYR-1.</title>
        <authorList>
            <consortium name="US DOE Joint Genome Institute"/>
            <person name="Copeland A."/>
            <person name="Lucas S."/>
            <person name="Lapidus A."/>
            <person name="Barry K."/>
            <person name="Detter J.C."/>
            <person name="Glavina del Rio T."/>
            <person name="Hammon N."/>
            <person name="Israni S."/>
            <person name="Dalin E."/>
            <person name="Tice H."/>
            <person name="Pitluck S."/>
            <person name="Singan V."/>
            <person name="Schmutz J."/>
            <person name="Larimer F."/>
            <person name="Land M."/>
            <person name="Hauser L."/>
            <person name="Kyrpides N."/>
            <person name="Anderson I.J."/>
            <person name="Miller C."/>
            <person name="Richardson P."/>
        </authorList>
    </citation>
    <scope>NUCLEOTIDE SEQUENCE [LARGE SCALE GENOMIC DNA]</scope>
    <source>
        <strain>DSM 7251 / JCM 13017 / BCRC 16820 / KCTC 9966 / NRRL B-24157 / PYR-1</strain>
    </source>
</reference>
<proteinExistence type="inferred from homology"/>